<accession>A3NTU6</accession>
<protein>
    <recommendedName>
        <fullName evidence="1">UPF0060 membrane protein BURPS1106A_1494</fullName>
    </recommendedName>
</protein>
<name>Y1494_BURP0</name>
<proteinExistence type="inferred from homology"/>
<sequence length="110" mass="11439">MLSLAKIAALFVLTAVAEIVGCYLPWLVLKAGKPAWLLAPAALSLALFAWLLTLHPAAAARTYAAYGGVYIAVALAWLRIVDGVPLSRWDVAGAALALAGMSVIALQPRG</sequence>
<comment type="subcellular location">
    <subcellularLocation>
        <location evidence="1">Cell inner membrane</location>
        <topology evidence="1">Multi-pass membrane protein</topology>
    </subcellularLocation>
</comment>
<comment type="similarity">
    <text evidence="1">Belongs to the UPF0060 family.</text>
</comment>
<comment type="sequence caution" evidence="2">
    <conflict type="erroneous initiation">
        <sequence resource="EMBL-CDS" id="ABN91616"/>
    </conflict>
</comment>
<reference key="1">
    <citation type="journal article" date="2010" name="Genome Biol. Evol.">
        <title>Continuing evolution of Burkholderia mallei through genome reduction and large-scale rearrangements.</title>
        <authorList>
            <person name="Losada L."/>
            <person name="Ronning C.M."/>
            <person name="DeShazer D."/>
            <person name="Woods D."/>
            <person name="Fedorova N."/>
            <person name="Kim H.S."/>
            <person name="Shabalina S.A."/>
            <person name="Pearson T.R."/>
            <person name="Brinkac L."/>
            <person name="Tan P."/>
            <person name="Nandi T."/>
            <person name="Crabtree J."/>
            <person name="Badger J."/>
            <person name="Beckstrom-Sternberg S."/>
            <person name="Saqib M."/>
            <person name="Schutzer S.E."/>
            <person name="Keim P."/>
            <person name="Nierman W.C."/>
        </authorList>
    </citation>
    <scope>NUCLEOTIDE SEQUENCE [LARGE SCALE GENOMIC DNA]</scope>
    <source>
        <strain>1106a</strain>
    </source>
</reference>
<gene>
    <name type="ordered locus">BURPS1106A_1494</name>
</gene>
<organism>
    <name type="scientific">Burkholderia pseudomallei (strain 1106a)</name>
    <dbReference type="NCBI Taxonomy" id="357348"/>
    <lineage>
        <taxon>Bacteria</taxon>
        <taxon>Pseudomonadati</taxon>
        <taxon>Pseudomonadota</taxon>
        <taxon>Betaproteobacteria</taxon>
        <taxon>Burkholderiales</taxon>
        <taxon>Burkholderiaceae</taxon>
        <taxon>Burkholderia</taxon>
        <taxon>pseudomallei group</taxon>
    </lineage>
</organism>
<evidence type="ECO:0000255" key="1">
    <source>
        <dbReference type="HAMAP-Rule" id="MF_00010"/>
    </source>
</evidence>
<evidence type="ECO:0000305" key="2"/>
<dbReference type="EMBL" id="CP000572">
    <property type="protein sequence ID" value="ABN91616.1"/>
    <property type="status" value="ALT_INIT"/>
    <property type="molecule type" value="Genomic_DNA"/>
</dbReference>
<dbReference type="RefSeq" id="WP_004193459.1">
    <property type="nucleotide sequence ID" value="NC_009076.1"/>
</dbReference>
<dbReference type="SMR" id="A3NTU6"/>
<dbReference type="KEGG" id="bpl:BURPS1106A_1494"/>
<dbReference type="HOGENOM" id="CLU_117653_2_0_4"/>
<dbReference type="Proteomes" id="UP000006738">
    <property type="component" value="Chromosome I"/>
</dbReference>
<dbReference type="GO" id="GO:0005886">
    <property type="term" value="C:plasma membrane"/>
    <property type="evidence" value="ECO:0007669"/>
    <property type="project" value="UniProtKB-SubCell"/>
</dbReference>
<dbReference type="HAMAP" id="MF_00010">
    <property type="entry name" value="UPF0060"/>
    <property type="match status" value="1"/>
</dbReference>
<dbReference type="InterPro" id="IPR003844">
    <property type="entry name" value="UPF0060"/>
</dbReference>
<dbReference type="NCBIfam" id="NF002586">
    <property type="entry name" value="PRK02237.1"/>
    <property type="match status" value="1"/>
</dbReference>
<dbReference type="PANTHER" id="PTHR36116">
    <property type="entry name" value="UPF0060 MEMBRANE PROTEIN YNFA"/>
    <property type="match status" value="1"/>
</dbReference>
<dbReference type="PANTHER" id="PTHR36116:SF1">
    <property type="entry name" value="UPF0060 MEMBRANE PROTEIN YNFA"/>
    <property type="match status" value="1"/>
</dbReference>
<dbReference type="Pfam" id="PF02694">
    <property type="entry name" value="UPF0060"/>
    <property type="match status" value="1"/>
</dbReference>
<dbReference type="SUPFAM" id="SSF103481">
    <property type="entry name" value="Multidrug resistance efflux transporter EmrE"/>
    <property type="match status" value="1"/>
</dbReference>
<feature type="chain" id="PRO_0000321579" description="UPF0060 membrane protein BURPS1106A_1494">
    <location>
        <begin position="1"/>
        <end position="110"/>
    </location>
</feature>
<feature type="transmembrane region" description="Helical" evidence="1">
    <location>
        <begin position="9"/>
        <end position="29"/>
    </location>
</feature>
<feature type="transmembrane region" description="Helical" evidence="1">
    <location>
        <begin position="34"/>
        <end position="54"/>
    </location>
</feature>
<feature type="transmembrane region" description="Helical" evidence="1">
    <location>
        <begin position="64"/>
        <end position="84"/>
    </location>
</feature>
<feature type="transmembrane region" description="Helical" evidence="1">
    <location>
        <begin position="86"/>
        <end position="106"/>
    </location>
</feature>
<keyword id="KW-0997">Cell inner membrane</keyword>
<keyword id="KW-1003">Cell membrane</keyword>
<keyword id="KW-0472">Membrane</keyword>
<keyword id="KW-0812">Transmembrane</keyword>
<keyword id="KW-1133">Transmembrane helix</keyword>